<proteinExistence type="inferred from homology"/>
<feature type="signal peptide" evidence="2">
    <location>
        <begin position="1"/>
        <end position="22"/>
    </location>
</feature>
<feature type="propeptide" id="PRO_0000009893">
    <location>
        <begin position="23"/>
        <end position="66"/>
    </location>
</feature>
<feature type="peptide" id="PRO_0000009894" description="Neuropeptide SF">
    <location>
        <begin position="68"/>
        <end position="78"/>
    </location>
</feature>
<feature type="peptide" id="PRO_0000009895" description="Neuropeptide FF">
    <location>
        <begin position="71"/>
        <end position="78"/>
    </location>
</feature>
<feature type="propeptide" id="PRO_0000009896">
    <location>
        <begin position="81"/>
        <end position="94"/>
    </location>
</feature>
<feature type="peptide" id="PRO_0000009897" description="Neuropeptide AF">
    <location>
        <begin position="95"/>
        <end position="112"/>
    </location>
</feature>
<feature type="region of interest" description="Disordered" evidence="3">
    <location>
        <begin position="20"/>
        <end position="51"/>
    </location>
</feature>
<feature type="region of interest" description="Disordered" evidence="3">
    <location>
        <begin position="78"/>
        <end position="102"/>
    </location>
</feature>
<feature type="modified residue" description="Phenylalanine amide" evidence="1">
    <location>
        <position position="78"/>
    </location>
</feature>
<feature type="modified residue" description="Phenylalanine amide" evidence="1">
    <location>
        <position position="112"/>
    </location>
</feature>
<organism>
    <name type="scientific">Bos taurus</name>
    <name type="common">Bovine</name>
    <dbReference type="NCBI Taxonomy" id="9913"/>
    <lineage>
        <taxon>Eukaryota</taxon>
        <taxon>Metazoa</taxon>
        <taxon>Chordata</taxon>
        <taxon>Craniata</taxon>
        <taxon>Vertebrata</taxon>
        <taxon>Euteleostomi</taxon>
        <taxon>Mammalia</taxon>
        <taxon>Eutheria</taxon>
        <taxon>Laurasiatheria</taxon>
        <taxon>Artiodactyla</taxon>
        <taxon>Ruminantia</taxon>
        <taxon>Pecora</taxon>
        <taxon>Bovidae</taxon>
        <taxon>Bovinae</taxon>
        <taxon>Bos</taxon>
    </lineage>
</organism>
<protein>
    <recommendedName>
        <fullName>Pro-FMRFamide-related neuropeptide FF</fullName>
    </recommendedName>
    <alternativeName>
        <fullName>FMRFamide-related peptides</fullName>
    </alternativeName>
    <component>
        <recommendedName>
            <fullName>Neuropeptide SF</fullName>
            <shortName>NPSF</shortName>
        </recommendedName>
    </component>
    <component>
        <recommendedName>
            <fullName>Neuropeptide FF</fullName>
            <shortName>NPFF</shortName>
        </recommendedName>
    </component>
    <component>
        <recommendedName>
            <fullName>Neuropeptide AF</fullName>
            <shortName>NPAF</shortName>
        </recommendedName>
    </component>
</protein>
<reference key="1">
    <citation type="journal article" date="1999" name="Mol. Pharmacol.">
        <title>Gene for pain modulatory neuropeptide NPFF: induction in spinal cord by noxious stimuli.</title>
        <authorList>
            <person name="Vilim F.S."/>
            <person name="Aarnisalo A.A."/>
            <person name="Nieminen M.L."/>
            <person name="Lintunen M."/>
            <person name="Karlstedt K."/>
            <person name="Kontinen V.K."/>
            <person name="Kalso E."/>
            <person name="States B."/>
            <person name="Panula P."/>
            <person name="Ziff E."/>
        </authorList>
    </citation>
    <scope>NUCLEOTIDE SEQUENCE [MRNA]</scope>
    <source>
        <tissue>Brain</tissue>
    </source>
</reference>
<gene>
    <name type="primary">NPFF</name>
</gene>
<name>NPFF_BOVIN</name>
<keyword id="KW-0027">Amidation</keyword>
<keyword id="KW-0165">Cleavage on pair of basic residues</keyword>
<keyword id="KW-0527">Neuropeptide</keyword>
<keyword id="KW-1185">Reference proteome</keyword>
<keyword id="KW-0964">Secreted</keyword>
<keyword id="KW-0732">Signal</keyword>
<dbReference type="EMBL" id="AF148699">
    <property type="protein sequence ID" value="AAD39827.1"/>
    <property type="molecule type" value="mRNA"/>
</dbReference>
<dbReference type="RefSeq" id="NP_776548.1">
    <property type="nucleotide sequence ID" value="NM_174123.3"/>
</dbReference>
<dbReference type="FunCoup" id="Q9TUX7">
    <property type="interactions" value="16"/>
</dbReference>
<dbReference type="STRING" id="9913.ENSBTAP00000003109"/>
<dbReference type="PaxDb" id="9913-ENSBTAP00000003109"/>
<dbReference type="GeneID" id="281354"/>
<dbReference type="KEGG" id="bta:281354"/>
<dbReference type="CTD" id="8620"/>
<dbReference type="VEuPathDB" id="HostDB:ENSBTAG00000002401"/>
<dbReference type="eggNOG" id="ENOG502S60B">
    <property type="taxonomic scope" value="Eukaryota"/>
</dbReference>
<dbReference type="HOGENOM" id="CLU_169782_0_0_1"/>
<dbReference type="InParanoid" id="Q9TUX7"/>
<dbReference type="OMA" id="EGLHSQF"/>
<dbReference type="OrthoDB" id="8878267at2759"/>
<dbReference type="Reactome" id="R-BTA-389397">
    <property type="pathway name" value="Orexin and neuropeptides FF and QRFP bind to their respective receptors"/>
</dbReference>
<dbReference type="Reactome" id="R-BTA-416476">
    <property type="pathway name" value="G alpha (q) signalling events"/>
</dbReference>
<dbReference type="Proteomes" id="UP000009136">
    <property type="component" value="Chromosome 5"/>
</dbReference>
<dbReference type="Bgee" id="ENSBTAG00000002401">
    <property type="expression patterns" value="Expressed in temporal cortex and 55 other cell types or tissues"/>
</dbReference>
<dbReference type="GO" id="GO:0043679">
    <property type="term" value="C:axon terminus"/>
    <property type="evidence" value="ECO:0000318"/>
    <property type="project" value="GO_Central"/>
</dbReference>
<dbReference type="GO" id="GO:0030425">
    <property type="term" value="C:dendrite"/>
    <property type="evidence" value="ECO:0000318"/>
    <property type="project" value="GO_Central"/>
</dbReference>
<dbReference type="GO" id="GO:0005615">
    <property type="term" value="C:extracellular space"/>
    <property type="evidence" value="ECO:0000318"/>
    <property type="project" value="GO_Central"/>
</dbReference>
<dbReference type="GO" id="GO:0043204">
    <property type="term" value="C:perikaryon"/>
    <property type="evidence" value="ECO:0000318"/>
    <property type="project" value="GO_Central"/>
</dbReference>
<dbReference type="GO" id="GO:0098794">
    <property type="term" value="C:postsynapse"/>
    <property type="evidence" value="ECO:0007669"/>
    <property type="project" value="GOC"/>
</dbReference>
<dbReference type="GO" id="GO:0001664">
    <property type="term" value="F:G protein-coupled receptor binding"/>
    <property type="evidence" value="ECO:0000318"/>
    <property type="project" value="GO_Central"/>
</dbReference>
<dbReference type="GO" id="GO:0005184">
    <property type="term" value="F:neuropeptide hormone activity"/>
    <property type="evidence" value="ECO:0000318"/>
    <property type="project" value="GO_Central"/>
</dbReference>
<dbReference type="GO" id="GO:0060079">
    <property type="term" value="P:excitatory postsynaptic potential"/>
    <property type="evidence" value="ECO:0000318"/>
    <property type="project" value="GO_Central"/>
</dbReference>
<dbReference type="GO" id="GO:0007218">
    <property type="term" value="P:neuropeptide signaling pathway"/>
    <property type="evidence" value="ECO:0007669"/>
    <property type="project" value="UniProtKB-KW"/>
</dbReference>
<dbReference type="InterPro" id="IPR008065">
    <property type="entry name" value="NPFF"/>
</dbReference>
<dbReference type="PANTHER" id="PTHR15044">
    <property type="entry name" value="NEUROPEPTIDE FF"/>
    <property type="match status" value="1"/>
</dbReference>
<dbReference type="PANTHER" id="PTHR15044:SF0">
    <property type="entry name" value="PRO-FMRFAMIDE-RELATED NEUROPEPTIDE FF"/>
    <property type="match status" value="1"/>
</dbReference>
<dbReference type="Pfam" id="PF15085">
    <property type="entry name" value="NPFF"/>
    <property type="match status" value="1"/>
</dbReference>
<dbReference type="PIRSF" id="PIRSF038092">
    <property type="entry name" value="FMRFamid-rel_pep_precur"/>
    <property type="match status" value="1"/>
</dbReference>
<dbReference type="PRINTS" id="PR01682">
    <property type="entry name" value="FMRFAMIDEPEP"/>
</dbReference>
<evidence type="ECO:0000250" key="1"/>
<evidence type="ECO:0000255" key="2"/>
<evidence type="ECO:0000256" key="3">
    <source>
        <dbReference type="SAM" id="MobiDB-lite"/>
    </source>
</evidence>
<evidence type="ECO:0000305" key="4"/>
<comment type="function">
    <text>Morphine modulating peptides. Have wide-ranging physiologic effects, including the modulation of morphine-induced analgesia, elevation of arterial blood pressure, and increased somatostatin secretion from the pancreas. The neuropeptide FF potentiates and sensitizes ASIC3 cation channel.</text>
</comment>
<comment type="subcellular location">
    <subcellularLocation>
        <location>Secreted</location>
    </subcellularLocation>
</comment>
<comment type="similarity">
    <text evidence="4">Belongs to the FARP (FMRFamide related peptide) family.</text>
</comment>
<accession>Q9TUX7</accession>
<sequence length="115" mass="12614">MDARQAAALLLVLLLVTDWSHAEGPGGRDGGDQIFMEEDSGAHPAQDAQTPRSLLRSLLQAMQRPGRSPAFLFQPQRFGRNTRGSWSNKRLSPRAGEGLSSPFWSLAAPQRFGKK</sequence>